<protein>
    <recommendedName>
        <fullName evidence="2">Translation initiation factor IF-2</fullName>
    </recommendedName>
</protein>
<dbReference type="EMBL" id="CP001164">
    <property type="protein sequence ID" value="ACI39780.1"/>
    <property type="molecule type" value="Genomic_DNA"/>
</dbReference>
<dbReference type="RefSeq" id="WP_000133044.1">
    <property type="nucleotide sequence ID" value="NC_011353.1"/>
</dbReference>
<dbReference type="SMR" id="B5YS58"/>
<dbReference type="GeneID" id="75206024"/>
<dbReference type="KEGG" id="ecf:ECH74115_4489"/>
<dbReference type="HOGENOM" id="CLU_006301_6_3_6"/>
<dbReference type="GO" id="GO:0005829">
    <property type="term" value="C:cytosol"/>
    <property type="evidence" value="ECO:0007669"/>
    <property type="project" value="TreeGrafter"/>
</dbReference>
<dbReference type="GO" id="GO:0005525">
    <property type="term" value="F:GTP binding"/>
    <property type="evidence" value="ECO:0007669"/>
    <property type="project" value="UniProtKB-KW"/>
</dbReference>
<dbReference type="GO" id="GO:0003924">
    <property type="term" value="F:GTPase activity"/>
    <property type="evidence" value="ECO:0007669"/>
    <property type="project" value="UniProtKB-UniRule"/>
</dbReference>
<dbReference type="GO" id="GO:0097216">
    <property type="term" value="F:guanosine tetraphosphate binding"/>
    <property type="evidence" value="ECO:0007669"/>
    <property type="project" value="UniProtKB-ARBA"/>
</dbReference>
<dbReference type="GO" id="GO:0003743">
    <property type="term" value="F:translation initiation factor activity"/>
    <property type="evidence" value="ECO:0007669"/>
    <property type="project" value="UniProtKB-UniRule"/>
</dbReference>
<dbReference type="CDD" id="cd01887">
    <property type="entry name" value="IF2_eIF5B"/>
    <property type="match status" value="1"/>
</dbReference>
<dbReference type="CDD" id="cd03702">
    <property type="entry name" value="IF2_mtIF2_II"/>
    <property type="match status" value="1"/>
</dbReference>
<dbReference type="CDD" id="cd03692">
    <property type="entry name" value="mtIF2_IVc"/>
    <property type="match status" value="1"/>
</dbReference>
<dbReference type="FunFam" id="2.40.30.10:FF:000007">
    <property type="entry name" value="Translation initiation factor IF-2"/>
    <property type="match status" value="1"/>
</dbReference>
<dbReference type="FunFam" id="2.40.30.10:FF:000008">
    <property type="entry name" value="Translation initiation factor IF-2"/>
    <property type="match status" value="1"/>
</dbReference>
<dbReference type="FunFam" id="3.30.56.50:FF:000001">
    <property type="entry name" value="Translation initiation factor IF-2"/>
    <property type="match status" value="1"/>
</dbReference>
<dbReference type="FunFam" id="3.40.50.10050:FF:000001">
    <property type="entry name" value="Translation initiation factor IF-2"/>
    <property type="match status" value="1"/>
</dbReference>
<dbReference type="FunFam" id="3.40.50.300:FF:000019">
    <property type="entry name" value="Translation initiation factor IF-2"/>
    <property type="match status" value="1"/>
</dbReference>
<dbReference type="Gene3D" id="3.40.50.300">
    <property type="entry name" value="P-loop containing nucleotide triphosphate hydrolases"/>
    <property type="match status" value="1"/>
</dbReference>
<dbReference type="Gene3D" id="3.30.56.50">
    <property type="entry name" value="Putative DNA-binding domain, N-terminal subdomain of bacterial translation initiation factor IF2"/>
    <property type="match status" value="1"/>
</dbReference>
<dbReference type="Gene3D" id="2.40.30.10">
    <property type="entry name" value="Translation factors"/>
    <property type="match status" value="2"/>
</dbReference>
<dbReference type="Gene3D" id="3.40.50.10050">
    <property type="entry name" value="Translation initiation factor IF- 2, domain 3"/>
    <property type="match status" value="1"/>
</dbReference>
<dbReference type="HAMAP" id="MF_00100_B">
    <property type="entry name" value="IF_2_B"/>
    <property type="match status" value="1"/>
</dbReference>
<dbReference type="InterPro" id="IPR009061">
    <property type="entry name" value="DNA-bd_dom_put_sf"/>
</dbReference>
<dbReference type="InterPro" id="IPR053905">
    <property type="entry name" value="EF-G-like_DII"/>
</dbReference>
<dbReference type="InterPro" id="IPR004161">
    <property type="entry name" value="EFTu-like_2"/>
</dbReference>
<dbReference type="InterPro" id="IPR013575">
    <property type="entry name" value="IF2_assoc_dom_bac"/>
</dbReference>
<dbReference type="InterPro" id="IPR044145">
    <property type="entry name" value="IF2_II"/>
</dbReference>
<dbReference type="InterPro" id="IPR006847">
    <property type="entry name" value="IF2_N"/>
</dbReference>
<dbReference type="InterPro" id="IPR027417">
    <property type="entry name" value="P-loop_NTPase"/>
</dbReference>
<dbReference type="InterPro" id="IPR005225">
    <property type="entry name" value="Small_GTP-bd"/>
</dbReference>
<dbReference type="InterPro" id="IPR000795">
    <property type="entry name" value="T_Tr_GTP-bd_dom"/>
</dbReference>
<dbReference type="InterPro" id="IPR000178">
    <property type="entry name" value="TF_IF2_bacterial-like"/>
</dbReference>
<dbReference type="InterPro" id="IPR015760">
    <property type="entry name" value="TIF_IF2"/>
</dbReference>
<dbReference type="InterPro" id="IPR023115">
    <property type="entry name" value="TIF_IF2_dom3"/>
</dbReference>
<dbReference type="InterPro" id="IPR036925">
    <property type="entry name" value="TIF_IF2_dom3_sf"/>
</dbReference>
<dbReference type="InterPro" id="IPR009000">
    <property type="entry name" value="Transl_B-barrel_sf"/>
</dbReference>
<dbReference type="NCBIfam" id="TIGR00487">
    <property type="entry name" value="IF-2"/>
    <property type="match status" value="1"/>
</dbReference>
<dbReference type="NCBIfam" id="TIGR00231">
    <property type="entry name" value="small_GTP"/>
    <property type="match status" value="1"/>
</dbReference>
<dbReference type="PANTHER" id="PTHR43381:SF5">
    <property type="entry name" value="TR-TYPE G DOMAIN-CONTAINING PROTEIN"/>
    <property type="match status" value="1"/>
</dbReference>
<dbReference type="PANTHER" id="PTHR43381">
    <property type="entry name" value="TRANSLATION INITIATION FACTOR IF-2-RELATED"/>
    <property type="match status" value="1"/>
</dbReference>
<dbReference type="Pfam" id="PF22042">
    <property type="entry name" value="EF-G_D2"/>
    <property type="match status" value="1"/>
</dbReference>
<dbReference type="Pfam" id="PF00009">
    <property type="entry name" value="GTP_EFTU"/>
    <property type="match status" value="1"/>
</dbReference>
<dbReference type="Pfam" id="PF03144">
    <property type="entry name" value="GTP_EFTU_D2"/>
    <property type="match status" value="1"/>
</dbReference>
<dbReference type="Pfam" id="PF11987">
    <property type="entry name" value="IF-2"/>
    <property type="match status" value="1"/>
</dbReference>
<dbReference type="Pfam" id="PF08364">
    <property type="entry name" value="IF2_assoc"/>
    <property type="match status" value="1"/>
</dbReference>
<dbReference type="Pfam" id="PF04760">
    <property type="entry name" value="IF2_N"/>
    <property type="match status" value="2"/>
</dbReference>
<dbReference type="SUPFAM" id="SSF52156">
    <property type="entry name" value="Initiation factor IF2/eIF5b, domain 3"/>
    <property type="match status" value="1"/>
</dbReference>
<dbReference type="SUPFAM" id="SSF52540">
    <property type="entry name" value="P-loop containing nucleoside triphosphate hydrolases"/>
    <property type="match status" value="1"/>
</dbReference>
<dbReference type="SUPFAM" id="SSF46955">
    <property type="entry name" value="Putative DNA-binding domain"/>
    <property type="match status" value="1"/>
</dbReference>
<dbReference type="SUPFAM" id="SSF50447">
    <property type="entry name" value="Translation proteins"/>
    <property type="match status" value="2"/>
</dbReference>
<dbReference type="PROSITE" id="PS51722">
    <property type="entry name" value="G_TR_2"/>
    <property type="match status" value="1"/>
</dbReference>
<dbReference type="PROSITE" id="PS01176">
    <property type="entry name" value="IF2"/>
    <property type="match status" value="1"/>
</dbReference>
<gene>
    <name evidence="2" type="primary">infB</name>
    <name type="ordered locus">ECH74115_4489</name>
</gene>
<evidence type="ECO:0000250" key="1"/>
<evidence type="ECO:0000255" key="2">
    <source>
        <dbReference type="HAMAP-Rule" id="MF_00100"/>
    </source>
</evidence>
<evidence type="ECO:0000256" key="3">
    <source>
        <dbReference type="SAM" id="MobiDB-lite"/>
    </source>
</evidence>
<keyword id="KW-0007">Acetylation</keyword>
<keyword id="KW-0963">Cytoplasm</keyword>
<keyword id="KW-0342">GTP-binding</keyword>
<keyword id="KW-0396">Initiation factor</keyword>
<keyword id="KW-0547">Nucleotide-binding</keyword>
<keyword id="KW-0648">Protein biosynthesis</keyword>
<feature type="chain" id="PRO_1000093782" description="Translation initiation factor IF-2">
    <location>
        <begin position="1"/>
        <end position="890"/>
    </location>
</feature>
<feature type="domain" description="tr-type G">
    <location>
        <begin position="389"/>
        <end position="558"/>
    </location>
</feature>
<feature type="region of interest" description="Disordered" evidence="3">
    <location>
        <begin position="45"/>
        <end position="304"/>
    </location>
</feature>
<feature type="region of interest" description="G1" evidence="1">
    <location>
        <begin position="398"/>
        <end position="405"/>
    </location>
</feature>
<feature type="region of interest" description="G2" evidence="1">
    <location>
        <begin position="423"/>
        <end position="427"/>
    </location>
</feature>
<feature type="region of interest" description="G3" evidence="1">
    <location>
        <begin position="444"/>
        <end position="447"/>
    </location>
</feature>
<feature type="region of interest" description="G4" evidence="1">
    <location>
        <begin position="498"/>
        <end position="501"/>
    </location>
</feature>
<feature type="region of interest" description="G5" evidence="1">
    <location>
        <begin position="534"/>
        <end position="536"/>
    </location>
</feature>
<feature type="compositionally biased region" description="Polar residues" evidence="3">
    <location>
        <begin position="67"/>
        <end position="81"/>
    </location>
</feature>
<feature type="compositionally biased region" description="Basic and acidic residues" evidence="3">
    <location>
        <begin position="92"/>
        <end position="217"/>
    </location>
</feature>
<feature type="compositionally biased region" description="Basic residues" evidence="3">
    <location>
        <begin position="252"/>
        <end position="266"/>
    </location>
</feature>
<feature type="compositionally biased region" description="Basic and acidic residues" evidence="3">
    <location>
        <begin position="267"/>
        <end position="280"/>
    </location>
</feature>
<feature type="binding site" evidence="2">
    <location>
        <begin position="398"/>
        <end position="405"/>
    </location>
    <ligand>
        <name>GTP</name>
        <dbReference type="ChEBI" id="CHEBI:37565"/>
    </ligand>
</feature>
<feature type="binding site" evidence="2">
    <location>
        <begin position="444"/>
        <end position="448"/>
    </location>
    <ligand>
        <name>GTP</name>
        <dbReference type="ChEBI" id="CHEBI:37565"/>
    </ligand>
</feature>
<feature type="binding site" evidence="2">
    <location>
        <begin position="498"/>
        <end position="501"/>
    </location>
    <ligand>
        <name>GTP</name>
        <dbReference type="ChEBI" id="CHEBI:37565"/>
    </ligand>
</feature>
<feature type="modified residue" description="N6-acetyllysine" evidence="1">
    <location>
        <position position="808"/>
    </location>
</feature>
<reference key="1">
    <citation type="journal article" date="2011" name="Proc. Natl. Acad. Sci. U.S.A.">
        <title>Genomic anatomy of Escherichia coli O157:H7 outbreaks.</title>
        <authorList>
            <person name="Eppinger M."/>
            <person name="Mammel M.K."/>
            <person name="Leclerc J.E."/>
            <person name="Ravel J."/>
            <person name="Cebula T.A."/>
        </authorList>
    </citation>
    <scope>NUCLEOTIDE SEQUENCE [LARGE SCALE GENOMIC DNA]</scope>
    <source>
        <strain>EC4115 / EHEC</strain>
    </source>
</reference>
<sequence>MTDVTIKTLAAERQTSVERLVQQFADAGIRKSADDSVSAQEKQTLIDHLNQKNSGPDKLTLQRKTRSTLNIPGTGGKSKSVQIEVRKKRTFVKRDPQEAERLAAEEQAQREAEEQARREAEESAKREAQQKAEREAAEQAKREAAEQAKREAAEKDKVSNQQDDMTKNAQAEKARREQEAAELKRKAEEEARRKLEEEARRVAEEARRMAEENKWTDNAEPTEDSSDYHVTTSQHARQAEDESDREVEGGRGRGRNAKAARPKKGNKHAESKADREEARAAVRGGKGGKRKGSSLQQGFQKPAQAVNRDVVIGETITVGELANKMAVKGSQVIKAMMKLGAMATINQVIDQETAQLVAEEMGHKVILRRENELEEAVMSDRDTGAAAEPRAPVVTIMGHVDHGKTSLLDYIRSTKVASGEAGGITQHIGAYHVETENGMITFLDTPGHAAFTSMRARGAQATDIVVLVVAADDGVMPQTIEAIQHAKAAQVPVVVAVNKIDKPEADPDRVKNELSQYGILPEEWGGESQFVHVSAKAGTGIDELLDAILLQAEVLELKAVRKGMASGAVIESFLDKGRGPVATVLVREGTLHKGDIVLCGFEYGRVRAMRNELGQEVLEAGPSIPVEILGLSGVPAAGDEVTVVRDEKKAREVALYRQGKFREVKLARQQKSKLENMFANMTEGEVHEVNIVLKADVQGSVEAISDSLLKLSTDEVKVKIIGSGVGGITETDATLAAASNAILVGFNVRADASARKVIEAESLDLRYYSVIYNLIDEVKAAMSGMLSPELKQQIIGLAEVRDVFKSPKFGAIAGCMVTEGVVKRHNPIRVLRDNVVIYEGELESLRRFKDDVNEVRNGMECGIGVKNYNDVRTGDVIEVFEIIEIQRTIA</sequence>
<accession>B5YS58</accession>
<organism>
    <name type="scientific">Escherichia coli O157:H7 (strain EC4115 / EHEC)</name>
    <dbReference type="NCBI Taxonomy" id="444450"/>
    <lineage>
        <taxon>Bacteria</taxon>
        <taxon>Pseudomonadati</taxon>
        <taxon>Pseudomonadota</taxon>
        <taxon>Gammaproteobacteria</taxon>
        <taxon>Enterobacterales</taxon>
        <taxon>Enterobacteriaceae</taxon>
        <taxon>Escherichia</taxon>
    </lineage>
</organism>
<comment type="function">
    <text evidence="2">One of the essential components for the initiation of protein synthesis. Protects formylmethionyl-tRNA from spontaneous hydrolysis and promotes its binding to the 30S ribosomal subunits. Also involved in the hydrolysis of GTP during the formation of the 70S ribosomal complex.</text>
</comment>
<comment type="subcellular location">
    <subcellularLocation>
        <location evidence="2">Cytoplasm</location>
    </subcellularLocation>
</comment>
<comment type="similarity">
    <text evidence="2">Belongs to the TRAFAC class translation factor GTPase superfamily. Classic translation factor GTPase family. IF-2 subfamily.</text>
</comment>
<name>IF2_ECO5E</name>
<proteinExistence type="inferred from homology"/>